<name>PYRF_METAC</name>
<accession>Q8TS37</accession>
<keyword id="KW-0210">Decarboxylase</keyword>
<keyword id="KW-0456">Lyase</keyword>
<keyword id="KW-0665">Pyrimidine biosynthesis</keyword>
<keyword id="KW-1185">Reference proteome</keyword>
<protein>
    <recommendedName>
        <fullName evidence="1">Orotidine 5'-phosphate decarboxylase</fullName>
        <ecNumber evidence="1">4.1.1.23</ecNumber>
    </recommendedName>
    <alternativeName>
        <fullName evidence="1">OMP decarboxylase</fullName>
        <shortName evidence="1">OMPDCase</shortName>
        <shortName evidence="1">OMPdecase</shortName>
    </alternativeName>
</protein>
<reference key="1">
    <citation type="journal article" date="2002" name="Genome Res.">
        <title>The genome of Methanosarcina acetivorans reveals extensive metabolic and physiological diversity.</title>
        <authorList>
            <person name="Galagan J.E."/>
            <person name="Nusbaum C."/>
            <person name="Roy A."/>
            <person name="Endrizzi M.G."/>
            <person name="Macdonald P."/>
            <person name="FitzHugh W."/>
            <person name="Calvo S."/>
            <person name="Engels R."/>
            <person name="Smirnov S."/>
            <person name="Atnoor D."/>
            <person name="Brown A."/>
            <person name="Allen N."/>
            <person name="Naylor J."/>
            <person name="Stange-Thomann N."/>
            <person name="DeArellano K."/>
            <person name="Johnson R."/>
            <person name="Linton L."/>
            <person name="McEwan P."/>
            <person name="McKernan K."/>
            <person name="Talamas J."/>
            <person name="Tirrell A."/>
            <person name="Ye W."/>
            <person name="Zimmer A."/>
            <person name="Barber R.D."/>
            <person name="Cann I."/>
            <person name="Graham D.E."/>
            <person name="Grahame D.A."/>
            <person name="Guss A.M."/>
            <person name="Hedderich R."/>
            <person name="Ingram-Smith C."/>
            <person name="Kuettner H.C."/>
            <person name="Krzycki J.A."/>
            <person name="Leigh J.A."/>
            <person name="Li W."/>
            <person name="Liu J."/>
            <person name="Mukhopadhyay B."/>
            <person name="Reeve J.N."/>
            <person name="Smith K."/>
            <person name="Springer T.A."/>
            <person name="Umayam L.A."/>
            <person name="White O."/>
            <person name="White R.H."/>
            <person name="de Macario E.C."/>
            <person name="Ferry J.G."/>
            <person name="Jarrell K.F."/>
            <person name="Jing H."/>
            <person name="Macario A.J.L."/>
            <person name="Paulsen I.T."/>
            <person name="Pritchett M."/>
            <person name="Sowers K.R."/>
            <person name="Swanson R.V."/>
            <person name="Zinder S.H."/>
            <person name="Lander E."/>
            <person name="Metcalf W.W."/>
            <person name="Birren B."/>
        </authorList>
    </citation>
    <scope>NUCLEOTIDE SEQUENCE [LARGE SCALE GENOMIC DNA]</scope>
    <source>
        <strain>ATCC 35395 / DSM 2834 / JCM 12185 / C2A</strain>
    </source>
</reference>
<sequence>MERNTCMILALDVTDREEALKIAEDVWEFVDAIKVGYPLILATGLGIIRELAEFAPVIADFKVADIPNTNRLICDQVFEAGADAVIAQGFTGRDSLDACIEIASEYRKDVFVVSEMSHPGGADFMQPVAEAIAKMALEAGAFGLVAPATRPKRVKKIRRIIGDKLTIISPGVGAQGGKASDVIAAGADWVIVGRSIYKAESPKEAARQIAEEIQAELRGEY</sequence>
<gene>
    <name evidence="1" type="primary">pyrF</name>
    <name type="ordered locus">MA_0969</name>
</gene>
<comment type="function">
    <text evidence="1">Catalyzes the decarboxylation of orotidine 5'-monophosphate (OMP) to uridine 5'-monophosphate (UMP).</text>
</comment>
<comment type="catalytic activity">
    <reaction evidence="1">
        <text>orotidine 5'-phosphate + H(+) = UMP + CO2</text>
        <dbReference type="Rhea" id="RHEA:11596"/>
        <dbReference type="ChEBI" id="CHEBI:15378"/>
        <dbReference type="ChEBI" id="CHEBI:16526"/>
        <dbReference type="ChEBI" id="CHEBI:57538"/>
        <dbReference type="ChEBI" id="CHEBI:57865"/>
        <dbReference type="EC" id="4.1.1.23"/>
    </reaction>
</comment>
<comment type="pathway">
    <text evidence="1">Pyrimidine metabolism; UMP biosynthesis via de novo pathway; UMP from orotate: step 2/2.</text>
</comment>
<comment type="subunit">
    <text evidence="1">Homodimer.</text>
</comment>
<comment type="similarity">
    <text evidence="1">Belongs to the OMP decarboxylase family. Type 1 subfamily.</text>
</comment>
<comment type="sequence caution" evidence="2">
    <conflict type="erroneous initiation">
        <sequence resource="EMBL-CDS" id="AAM04401"/>
    </conflict>
</comment>
<proteinExistence type="inferred from homology"/>
<feature type="chain" id="PRO_0000134609" description="Orotidine 5'-phosphate decarboxylase">
    <location>
        <begin position="1"/>
        <end position="221"/>
    </location>
</feature>
<feature type="active site" description="Proton donor" evidence="1">
    <location>
        <position position="62"/>
    </location>
</feature>
<feature type="binding site" evidence="1">
    <location>
        <position position="12"/>
    </location>
    <ligand>
        <name>substrate</name>
    </ligand>
</feature>
<feature type="binding site" evidence="1">
    <location>
        <position position="34"/>
    </location>
    <ligand>
        <name>substrate</name>
    </ligand>
</feature>
<feature type="binding site" evidence="1">
    <location>
        <begin position="60"/>
        <end position="69"/>
    </location>
    <ligand>
        <name>substrate</name>
    </ligand>
</feature>
<feature type="binding site" evidence="1">
    <location>
        <position position="117"/>
    </location>
    <ligand>
        <name>substrate</name>
    </ligand>
</feature>
<feature type="binding site" evidence="1">
    <location>
        <begin position="170"/>
        <end position="180"/>
    </location>
    <ligand>
        <name>substrate</name>
    </ligand>
</feature>
<feature type="binding site" evidence="1">
    <location>
        <position position="193"/>
    </location>
    <ligand>
        <name>substrate</name>
    </ligand>
</feature>
<feature type="binding site" evidence="1">
    <location>
        <position position="194"/>
    </location>
    <ligand>
        <name>substrate</name>
    </ligand>
</feature>
<organism>
    <name type="scientific">Methanosarcina acetivorans (strain ATCC 35395 / DSM 2834 / JCM 12185 / C2A)</name>
    <dbReference type="NCBI Taxonomy" id="188937"/>
    <lineage>
        <taxon>Archaea</taxon>
        <taxon>Methanobacteriati</taxon>
        <taxon>Methanobacteriota</taxon>
        <taxon>Stenosarchaea group</taxon>
        <taxon>Methanomicrobia</taxon>
        <taxon>Methanosarcinales</taxon>
        <taxon>Methanosarcinaceae</taxon>
        <taxon>Methanosarcina</taxon>
    </lineage>
</organism>
<dbReference type="EC" id="4.1.1.23" evidence="1"/>
<dbReference type="EMBL" id="AE010299">
    <property type="protein sequence ID" value="AAM04401.1"/>
    <property type="status" value="ALT_INIT"/>
    <property type="molecule type" value="Genomic_DNA"/>
</dbReference>
<dbReference type="RefSeq" id="WP_048065013.1">
    <property type="nucleotide sequence ID" value="NC_003552.1"/>
</dbReference>
<dbReference type="SMR" id="Q8TS37"/>
<dbReference type="FunCoup" id="Q8TS37">
    <property type="interactions" value="94"/>
</dbReference>
<dbReference type="STRING" id="188937.MA_0969"/>
<dbReference type="EnsemblBacteria" id="AAM04401">
    <property type="protein sequence ID" value="AAM04401"/>
    <property type="gene ID" value="MA_0969"/>
</dbReference>
<dbReference type="GeneID" id="1472859"/>
<dbReference type="KEGG" id="mac:MA_0969"/>
<dbReference type="HOGENOM" id="CLU_067069_2_0_2"/>
<dbReference type="InParanoid" id="Q8TS37"/>
<dbReference type="OrthoDB" id="94124at2157"/>
<dbReference type="PhylomeDB" id="Q8TS37"/>
<dbReference type="UniPathway" id="UPA00070">
    <property type="reaction ID" value="UER00120"/>
</dbReference>
<dbReference type="Proteomes" id="UP000002487">
    <property type="component" value="Chromosome"/>
</dbReference>
<dbReference type="GO" id="GO:0005829">
    <property type="term" value="C:cytosol"/>
    <property type="evidence" value="ECO:0000318"/>
    <property type="project" value="GO_Central"/>
</dbReference>
<dbReference type="GO" id="GO:0004590">
    <property type="term" value="F:orotidine-5'-phosphate decarboxylase activity"/>
    <property type="evidence" value="ECO:0000318"/>
    <property type="project" value="GO_Central"/>
</dbReference>
<dbReference type="GO" id="GO:0006207">
    <property type="term" value="P:'de novo' pyrimidine nucleobase biosynthetic process"/>
    <property type="evidence" value="ECO:0000318"/>
    <property type="project" value="GO_Central"/>
</dbReference>
<dbReference type="GO" id="GO:0044205">
    <property type="term" value="P:'de novo' UMP biosynthetic process"/>
    <property type="evidence" value="ECO:0007669"/>
    <property type="project" value="UniProtKB-UniRule"/>
</dbReference>
<dbReference type="CDD" id="cd04725">
    <property type="entry name" value="OMP_decarboxylase_like"/>
    <property type="match status" value="1"/>
</dbReference>
<dbReference type="Gene3D" id="3.20.20.70">
    <property type="entry name" value="Aldolase class I"/>
    <property type="match status" value="1"/>
</dbReference>
<dbReference type="HAMAP" id="MF_01200_A">
    <property type="entry name" value="OMPdecase_type1_A"/>
    <property type="match status" value="1"/>
</dbReference>
<dbReference type="InterPro" id="IPR013785">
    <property type="entry name" value="Aldolase_TIM"/>
</dbReference>
<dbReference type="InterPro" id="IPR014732">
    <property type="entry name" value="OMPdecase"/>
</dbReference>
<dbReference type="InterPro" id="IPR047595">
    <property type="entry name" value="OMPdecase_arc"/>
</dbReference>
<dbReference type="InterPro" id="IPR018089">
    <property type="entry name" value="OMPdecase_AS"/>
</dbReference>
<dbReference type="InterPro" id="IPR001754">
    <property type="entry name" value="OMPdeCOase_dom"/>
</dbReference>
<dbReference type="InterPro" id="IPR011060">
    <property type="entry name" value="RibuloseP-bd_barrel"/>
</dbReference>
<dbReference type="NCBIfam" id="NF010386">
    <property type="entry name" value="PRK13813.1"/>
    <property type="match status" value="1"/>
</dbReference>
<dbReference type="NCBIfam" id="TIGR01740">
    <property type="entry name" value="pyrF"/>
    <property type="match status" value="1"/>
</dbReference>
<dbReference type="PANTHER" id="PTHR32119">
    <property type="entry name" value="OROTIDINE 5'-PHOSPHATE DECARBOXYLASE"/>
    <property type="match status" value="1"/>
</dbReference>
<dbReference type="PANTHER" id="PTHR32119:SF2">
    <property type="entry name" value="OROTIDINE 5'-PHOSPHATE DECARBOXYLASE"/>
    <property type="match status" value="1"/>
</dbReference>
<dbReference type="Pfam" id="PF00215">
    <property type="entry name" value="OMPdecase"/>
    <property type="match status" value="1"/>
</dbReference>
<dbReference type="SMART" id="SM00934">
    <property type="entry name" value="OMPdecase"/>
    <property type="match status" value="1"/>
</dbReference>
<dbReference type="SUPFAM" id="SSF51366">
    <property type="entry name" value="Ribulose-phoshate binding barrel"/>
    <property type="match status" value="1"/>
</dbReference>
<dbReference type="PROSITE" id="PS00156">
    <property type="entry name" value="OMPDECASE"/>
    <property type="match status" value="1"/>
</dbReference>
<evidence type="ECO:0000255" key="1">
    <source>
        <dbReference type="HAMAP-Rule" id="MF_01200"/>
    </source>
</evidence>
<evidence type="ECO:0000305" key="2"/>